<evidence type="ECO:0000250" key="1"/>
<evidence type="ECO:0000255" key="2">
    <source>
        <dbReference type="PROSITE-ProRule" id="PRU00296"/>
    </source>
</evidence>
<evidence type="ECO:0000305" key="3"/>
<feature type="chain" id="PRO_0000201109" description="Iron-dependent repressor IdeR">
    <location>
        <begin position="1"/>
        <end position="230"/>
    </location>
</feature>
<feature type="domain" description="HTH dtxR-type" evidence="2">
    <location>
        <begin position="4"/>
        <end position="65"/>
    </location>
</feature>
<protein>
    <recommendedName>
        <fullName>Iron-dependent repressor IdeR</fullName>
    </recommendedName>
</protein>
<comment type="function">
    <text evidence="1">Metal-dependent DNA-binding protein that controls transcription of many genes involved in iron metabolism.</text>
</comment>
<comment type="subunit">
    <text evidence="1">Homodimer.</text>
</comment>
<comment type="subcellular location">
    <subcellularLocation>
        <location evidence="1">Cytoplasm</location>
    </subcellularLocation>
</comment>
<comment type="similarity">
    <text evidence="3">Belongs to the DtxR/MntR family.</text>
</comment>
<name>IDER_MYCBO</name>
<dbReference type="EMBL" id="LT708304">
    <property type="protein sequence ID" value="SIU01348.1"/>
    <property type="molecule type" value="Genomic_DNA"/>
</dbReference>
<dbReference type="RefSeq" id="NP_856376.1">
    <property type="nucleotide sequence ID" value="NC_002945.3"/>
</dbReference>
<dbReference type="RefSeq" id="WP_003413962.1">
    <property type="nucleotide sequence ID" value="NC_002945.4"/>
</dbReference>
<dbReference type="SMR" id="P0A673"/>
<dbReference type="GeneID" id="45426698"/>
<dbReference type="KEGG" id="mbo:BQ2027_MB2730"/>
<dbReference type="PATRIC" id="fig|233413.5.peg.2992"/>
<dbReference type="Proteomes" id="UP000001419">
    <property type="component" value="Chromosome"/>
</dbReference>
<dbReference type="GO" id="GO:0005737">
    <property type="term" value="C:cytoplasm"/>
    <property type="evidence" value="ECO:0007669"/>
    <property type="project" value="UniProtKB-SubCell"/>
</dbReference>
<dbReference type="GO" id="GO:0003677">
    <property type="term" value="F:DNA binding"/>
    <property type="evidence" value="ECO:0007669"/>
    <property type="project" value="UniProtKB-KW"/>
</dbReference>
<dbReference type="GO" id="GO:0003700">
    <property type="term" value="F:DNA-binding transcription factor activity"/>
    <property type="evidence" value="ECO:0007669"/>
    <property type="project" value="InterPro"/>
</dbReference>
<dbReference type="GO" id="GO:0046983">
    <property type="term" value="F:protein dimerization activity"/>
    <property type="evidence" value="ECO:0007669"/>
    <property type="project" value="InterPro"/>
</dbReference>
<dbReference type="GO" id="GO:0046914">
    <property type="term" value="F:transition metal ion binding"/>
    <property type="evidence" value="ECO:0007669"/>
    <property type="project" value="InterPro"/>
</dbReference>
<dbReference type="GO" id="GO:0045892">
    <property type="term" value="P:negative regulation of DNA-templated transcription"/>
    <property type="evidence" value="ECO:0007669"/>
    <property type="project" value="TreeGrafter"/>
</dbReference>
<dbReference type="FunFam" id="1.10.60.10:FF:000001">
    <property type="entry name" value="Iron dependent repressor"/>
    <property type="match status" value="1"/>
</dbReference>
<dbReference type="FunFam" id="1.10.10.10:FF:000067">
    <property type="entry name" value="Iron-dependent repressor IdeR"/>
    <property type="match status" value="1"/>
</dbReference>
<dbReference type="FunFam" id="2.30.30.90:FF:000002">
    <property type="entry name" value="Iron-dependent repressor IdeR"/>
    <property type="match status" value="1"/>
</dbReference>
<dbReference type="Gene3D" id="2.30.30.90">
    <property type="match status" value="1"/>
</dbReference>
<dbReference type="Gene3D" id="1.10.60.10">
    <property type="entry name" value="Iron dependent repressor, metal binding and dimerisation domain"/>
    <property type="match status" value="1"/>
</dbReference>
<dbReference type="Gene3D" id="1.10.10.10">
    <property type="entry name" value="Winged helix-like DNA-binding domain superfamily/Winged helix DNA-binding domain"/>
    <property type="match status" value="1"/>
</dbReference>
<dbReference type="InterPro" id="IPR040767">
    <property type="entry name" value="DtxR/IdeR_SH3"/>
</dbReference>
<dbReference type="InterPro" id="IPR050536">
    <property type="entry name" value="DtxR_MntR_Metal-Reg"/>
</dbReference>
<dbReference type="InterPro" id="IPR007167">
    <property type="entry name" value="Fe-transptr_FeoA-like"/>
</dbReference>
<dbReference type="InterPro" id="IPR001367">
    <property type="entry name" value="Fe_dep_repressor"/>
</dbReference>
<dbReference type="InterPro" id="IPR036421">
    <property type="entry name" value="Fe_dep_repressor_sf"/>
</dbReference>
<dbReference type="InterPro" id="IPR038157">
    <property type="entry name" value="FeoA_core_dom"/>
</dbReference>
<dbReference type="InterPro" id="IPR022687">
    <property type="entry name" value="HTH_DTXR"/>
</dbReference>
<dbReference type="InterPro" id="IPR022689">
    <property type="entry name" value="Iron_dep_repressor"/>
</dbReference>
<dbReference type="InterPro" id="IPR008988">
    <property type="entry name" value="Transcriptional_repressor_C"/>
</dbReference>
<dbReference type="InterPro" id="IPR036388">
    <property type="entry name" value="WH-like_DNA-bd_sf"/>
</dbReference>
<dbReference type="InterPro" id="IPR036390">
    <property type="entry name" value="WH_DNA-bd_sf"/>
</dbReference>
<dbReference type="PANTHER" id="PTHR33238">
    <property type="entry name" value="IRON (METAL) DEPENDENT REPRESSOR, DTXR FAMILY"/>
    <property type="match status" value="1"/>
</dbReference>
<dbReference type="PANTHER" id="PTHR33238:SF10">
    <property type="entry name" value="IRON-DEPENDENT REPRESSOR IDER"/>
    <property type="match status" value="1"/>
</dbReference>
<dbReference type="Pfam" id="PF18357">
    <property type="entry name" value="DtxR"/>
    <property type="match status" value="1"/>
</dbReference>
<dbReference type="Pfam" id="PF02742">
    <property type="entry name" value="Fe_dep_repr_C"/>
    <property type="match status" value="1"/>
</dbReference>
<dbReference type="Pfam" id="PF01325">
    <property type="entry name" value="Fe_dep_repress"/>
    <property type="match status" value="1"/>
</dbReference>
<dbReference type="SMART" id="SM00899">
    <property type="entry name" value="FeoA"/>
    <property type="match status" value="1"/>
</dbReference>
<dbReference type="SMART" id="SM00529">
    <property type="entry name" value="HTH_DTXR"/>
    <property type="match status" value="1"/>
</dbReference>
<dbReference type="SUPFAM" id="SSF50037">
    <property type="entry name" value="C-terminal domain of transcriptional repressors"/>
    <property type="match status" value="1"/>
</dbReference>
<dbReference type="SUPFAM" id="SSF47979">
    <property type="entry name" value="Iron-dependent repressor protein, dimerization domain"/>
    <property type="match status" value="1"/>
</dbReference>
<dbReference type="SUPFAM" id="SSF46785">
    <property type="entry name" value="Winged helix' DNA-binding domain"/>
    <property type="match status" value="1"/>
</dbReference>
<dbReference type="PROSITE" id="PS50944">
    <property type="entry name" value="HTH_DTXR"/>
    <property type="match status" value="1"/>
</dbReference>
<proteinExistence type="inferred from homology"/>
<gene>
    <name type="primary">ideR</name>
    <name type="synonym">dtxR</name>
    <name type="ordered locus">BQ2027_MB2730</name>
</gene>
<organism>
    <name type="scientific">Mycobacterium bovis (strain ATCC BAA-935 / AF2122/97)</name>
    <dbReference type="NCBI Taxonomy" id="233413"/>
    <lineage>
        <taxon>Bacteria</taxon>
        <taxon>Bacillati</taxon>
        <taxon>Actinomycetota</taxon>
        <taxon>Actinomycetes</taxon>
        <taxon>Mycobacteriales</taxon>
        <taxon>Mycobacteriaceae</taxon>
        <taxon>Mycobacterium</taxon>
        <taxon>Mycobacterium tuberculosis complex</taxon>
    </lineage>
</organism>
<accession>P0A673</accession>
<accession>A0A1R3Y2D9</accession>
<accession>O08190</accession>
<accession>Q50495</accession>
<accession>X2BLC3</accession>
<keyword id="KW-0963">Cytoplasm</keyword>
<keyword id="KW-0238">DNA-binding</keyword>
<keyword id="KW-0408">Iron</keyword>
<keyword id="KW-1185">Reference proteome</keyword>
<keyword id="KW-0678">Repressor</keyword>
<keyword id="KW-0804">Transcription</keyword>
<keyword id="KW-0805">Transcription regulation</keyword>
<sequence length="230" mass="25233">MNELVDTTEMYLRTIYDLEEEGVTPLRARIAERLDQSGPTVSQTVSRMERDGLLRVAGDRHLELTEKGRALAIAVMRKHRLAERLLVDVIGLPWEEVHAEACRWEHVMSEDVERRLVKVLNNPTTSPFGNPIPGLVELGVGPEPGADDANLVRLTELPAGSPVAVVVRQLTEHVQGDIDLITRLKDAGVVPNARVTVETTPGGGVTIVIPGHENVTLPHEMAHAVKVEKV</sequence>
<reference key="1">
    <citation type="journal article" date="2003" name="Proc. Natl. Acad. Sci. U.S.A.">
        <title>The complete genome sequence of Mycobacterium bovis.</title>
        <authorList>
            <person name="Garnier T."/>
            <person name="Eiglmeier K."/>
            <person name="Camus J.-C."/>
            <person name="Medina N."/>
            <person name="Mansoor H."/>
            <person name="Pryor M."/>
            <person name="Duthoy S."/>
            <person name="Grondin S."/>
            <person name="Lacroix C."/>
            <person name="Monsempe C."/>
            <person name="Simon S."/>
            <person name="Harris B."/>
            <person name="Atkin R."/>
            <person name="Doggett J."/>
            <person name="Mayes R."/>
            <person name="Keating L."/>
            <person name="Wheeler P.R."/>
            <person name="Parkhill J."/>
            <person name="Barrell B.G."/>
            <person name="Cole S.T."/>
            <person name="Gordon S.V."/>
            <person name="Hewinson R.G."/>
        </authorList>
    </citation>
    <scope>NUCLEOTIDE SEQUENCE [LARGE SCALE GENOMIC DNA]</scope>
    <source>
        <strain>ATCC BAA-935 / AF2122/97</strain>
    </source>
</reference>
<reference key="2">
    <citation type="journal article" date="2017" name="Genome Announc.">
        <title>Updated reference genome sequence and annotation of Mycobacterium bovis AF2122/97.</title>
        <authorList>
            <person name="Malone K.M."/>
            <person name="Farrell D."/>
            <person name="Stuber T.P."/>
            <person name="Schubert O.T."/>
            <person name="Aebersold R."/>
            <person name="Robbe-Austerman S."/>
            <person name="Gordon S.V."/>
        </authorList>
    </citation>
    <scope>NUCLEOTIDE SEQUENCE [LARGE SCALE GENOMIC DNA]</scope>
    <scope>GENOME REANNOTATION</scope>
    <source>
        <strain>ATCC BAA-935 / AF2122/97</strain>
    </source>
</reference>